<comment type="function">
    <text evidence="1">Releases the N-terminal proline from various substrates.</text>
</comment>
<comment type="catalytic activity">
    <reaction evidence="1">
        <text>Release of N-terminal proline from a peptide.</text>
        <dbReference type="EC" id="3.4.11.5"/>
    </reaction>
</comment>
<comment type="subunit">
    <text evidence="1">Monomer.</text>
</comment>
<comment type="similarity">
    <text evidence="4">Belongs to the peptidase S33 family.</text>
</comment>
<comment type="sequence caution" evidence="5">
    <conflict type="erroneous initiation">
        <sequence resource="EMBL-CDS" id="ABQ05016"/>
    </conflict>
    <text>Extended N-terminus.</text>
</comment>
<feature type="chain" id="PRO_0000406319" description="Proline iminopeptidase">
    <location>
        <begin position="1"/>
        <end position="297"/>
    </location>
</feature>
<feature type="domain" description="AB hydrolase-1" evidence="4">
    <location>
        <begin position="26"/>
        <end position="131"/>
    </location>
</feature>
<feature type="active site" description="Nucleophile" evidence="3">
    <location>
        <position position="103"/>
    </location>
</feature>
<feature type="active site" evidence="2">
    <location>
        <position position="243"/>
    </location>
</feature>
<feature type="active site" description="Proton donor" evidence="3">
    <location>
        <position position="270"/>
    </location>
</feature>
<organism>
    <name type="scientific">Flavobacterium johnsoniae (strain ATCC 17061 / DSM 2064 / JCM 8514 / BCRC 14874 / CCUG 350202 / NBRC 14942 / NCIMB 11054 / UW101)</name>
    <name type="common">Cytophaga johnsonae</name>
    <dbReference type="NCBI Taxonomy" id="376686"/>
    <lineage>
        <taxon>Bacteria</taxon>
        <taxon>Pseudomonadati</taxon>
        <taxon>Bacteroidota</taxon>
        <taxon>Flavobacteriia</taxon>
        <taxon>Flavobacteriales</taxon>
        <taxon>Flavobacteriaceae</taxon>
        <taxon>Flavobacterium</taxon>
    </lineage>
</organism>
<reference key="1">
    <citation type="journal article" date="2009" name="Appl. Environ. Microbiol.">
        <title>Novel features of the polysaccharide-digesting gliding bacterium Flavobacterium johnsoniae as revealed by genome sequence analysis.</title>
        <authorList>
            <person name="McBride M.J."/>
            <person name="Xie G."/>
            <person name="Martens E.C."/>
            <person name="Lapidus A."/>
            <person name="Henrissat B."/>
            <person name="Rhodes R.G."/>
            <person name="Goltsman E."/>
            <person name="Wang W."/>
            <person name="Xu J."/>
            <person name="Hunnicutt D.W."/>
            <person name="Staroscik A.M."/>
            <person name="Hoover T.R."/>
            <person name="Cheng Y.Q."/>
            <person name="Stein J.L."/>
        </authorList>
    </citation>
    <scope>NUCLEOTIDE SEQUENCE [LARGE SCALE GENOMIC DNA]</scope>
    <source>
        <strain>ATCC 17061 / DSM 2064 / JCM 8514 / BCRC 14874 / CCUG 350202 / NBRC 14942 / NCIMB 11054 / UW101</strain>
    </source>
</reference>
<accession>A5FIF5</accession>
<keyword id="KW-0031">Aminopeptidase</keyword>
<keyword id="KW-0378">Hydrolase</keyword>
<keyword id="KW-0645">Protease</keyword>
<gene>
    <name type="primary">fpaP</name>
    <name type="ordered locus">Fjoh_1984</name>
</gene>
<protein>
    <recommendedName>
        <fullName evidence="1">Proline iminopeptidase</fullName>
        <shortName evidence="1">PIP</shortName>
        <ecNumber>3.4.11.5</ecNumber>
    </recommendedName>
    <alternativeName>
        <fullName evidence="1">Prolyl aminopeptidase</fullName>
        <shortName evidence="1">PAP</shortName>
    </alternativeName>
</protein>
<dbReference type="EC" id="3.4.11.5"/>
<dbReference type="EMBL" id="CP000685">
    <property type="protein sequence ID" value="ABQ05016.1"/>
    <property type="status" value="ALT_INIT"/>
    <property type="molecule type" value="Genomic_DNA"/>
</dbReference>
<dbReference type="RefSeq" id="WP_012024056.1">
    <property type="nucleotide sequence ID" value="NZ_MUGZ01000007.1"/>
</dbReference>
<dbReference type="SMR" id="A5FIF5"/>
<dbReference type="STRING" id="376686.Fjoh_1984"/>
<dbReference type="ESTHER" id="flaj1-pip">
    <property type="family name" value="Proline_iminopeptidase"/>
</dbReference>
<dbReference type="KEGG" id="fjo:Fjoh_1984"/>
<dbReference type="eggNOG" id="COG2267">
    <property type="taxonomic scope" value="Bacteria"/>
</dbReference>
<dbReference type="HOGENOM" id="CLU_020336_15_0_10"/>
<dbReference type="OrthoDB" id="9796770at2"/>
<dbReference type="Proteomes" id="UP000006694">
    <property type="component" value="Chromosome"/>
</dbReference>
<dbReference type="GO" id="GO:0016020">
    <property type="term" value="C:membrane"/>
    <property type="evidence" value="ECO:0007669"/>
    <property type="project" value="TreeGrafter"/>
</dbReference>
<dbReference type="GO" id="GO:0004177">
    <property type="term" value="F:aminopeptidase activity"/>
    <property type="evidence" value="ECO:0007669"/>
    <property type="project" value="UniProtKB-KW"/>
</dbReference>
<dbReference type="GO" id="GO:0006508">
    <property type="term" value="P:proteolysis"/>
    <property type="evidence" value="ECO:0007669"/>
    <property type="project" value="UniProtKB-KW"/>
</dbReference>
<dbReference type="Gene3D" id="3.40.50.1820">
    <property type="entry name" value="alpha/beta hydrolase"/>
    <property type="match status" value="1"/>
</dbReference>
<dbReference type="InterPro" id="IPR000073">
    <property type="entry name" value="AB_hydrolase_1"/>
</dbReference>
<dbReference type="InterPro" id="IPR029058">
    <property type="entry name" value="AB_hydrolase_fold"/>
</dbReference>
<dbReference type="InterPro" id="IPR050266">
    <property type="entry name" value="AB_hydrolase_sf"/>
</dbReference>
<dbReference type="InterPro" id="IPR002410">
    <property type="entry name" value="Peptidase_S33"/>
</dbReference>
<dbReference type="InterPro" id="IPR005945">
    <property type="entry name" value="Pro_imino_pep"/>
</dbReference>
<dbReference type="NCBIfam" id="TIGR01250">
    <property type="entry name" value="pro_imino_pep_2"/>
    <property type="match status" value="1"/>
</dbReference>
<dbReference type="PANTHER" id="PTHR43798:SF31">
    <property type="entry name" value="AB HYDROLASE SUPERFAMILY PROTEIN YCLE"/>
    <property type="match status" value="1"/>
</dbReference>
<dbReference type="PANTHER" id="PTHR43798">
    <property type="entry name" value="MONOACYLGLYCEROL LIPASE"/>
    <property type="match status" value="1"/>
</dbReference>
<dbReference type="Pfam" id="PF00561">
    <property type="entry name" value="Abhydrolase_1"/>
    <property type="match status" value="1"/>
</dbReference>
<dbReference type="PIRSF" id="PIRSF005539">
    <property type="entry name" value="Pept_S33_TRI_F1"/>
    <property type="match status" value="1"/>
</dbReference>
<dbReference type="PRINTS" id="PR00793">
    <property type="entry name" value="PROAMNOPTASE"/>
</dbReference>
<dbReference type="SUPFAM" id="SSF53474">
    <property type="entry name" value="alpha/beta-Hydrolases"/>
    <property type="match status" value="1"/>
</dbReference>
<proteinExistence type="inferred from homology"/>
<sequence>MIPIKTPVGEFKVWIKRFGTNPKIKVLLLHGGPAMTHEYMECFETFFQREGFEFYEYDQLGSYYSDQPKDSSLWTIDRFVDEVEQVRKAINADKDNFYVLGNSWGGILAMEYALKYQQNMKGLLVSNMMASAPEYGKYADEVLAKQMKPEILKEIRDLEAKKDFENPRYMELLLPNFYKEHLCRLNEWPDGLNRASKHVNGEIYTLMQGPSEFGISGRLAKWDIKNRLHEITIPTLMIGAKYDTMDPKAMEEQSKLVKKGRYLYCPNGSHLAMWDDQKVFMNGVIQFINDVNDEKVN</sequence>
<evidence type="ECO:0000250" key="1">
    <source>
        <dbReference type="UniProtKB" id="O05420"/>
    </source>
</evidence>
<evidence type="ECO:0000250" key="2">
    <source>
        <dbReference type="UniProtKB" id="O32449"/>
    </source>
</evidence>
<evidence type="ECO:0000250" key="3">
    <source>
        <dbReference type="UniProtKB" id="P96084"/>
    </source>
</evidence>
<evidence type="ECO:0000255" key="4"/>
<evidence type="ECO:0000305" key="5"/>
<name>PIP_FLAJ1</name>